<comment type="function">
    <text evidence="1">Catalyzes the condensation of pantoate with beta-alanine in an ATP-dependent reaction via a pantoyl-adenylate intermediate.</text>
</comment>
<comment type="catalytic activity">
    <reaction evidence="1">
        <text>(R)-pantoate + beta-alanine + ATP = (R)-pantothenate + AMP + diphosphate + H(+)</text>
        <dbReference type="Rhea" id="RHEA:10912"/>
        <dbReference type="ChEBI" id="CHEBI:15378"/>
        <dbReference type="ChEBI" id="CHEBI:15980"/>
        <dbReference type="ChEBI" id="CHEBI:29032"/>
        <dbReference type="ChEBI" id="CHEBI:30616"/>
        <dbReference type="ChEBI" id="CHEBI:33019"/>
        <dbReference type="ChEBI" id="CHEBI:57966"/>
        <dbReference type="ChEBI" id="CHEBI:456215"/>
        <dbReference type="EC" id="6.3.2.1"/>
    </reaction>
</comment>
<comment type="pathway">
    <text evidence="1">Cofactor biosynthesis; (R)-pantothenate biosynthesis; (R)-pantothenate from (R)-pantoate and beta-alanine: step 1/1.</text>
</comment>
<comment type="subunit">
    <text evidence="1">Homodimer.</text>
</comment>
<comment type="subcellular location">
    <subcellularLocation>
        <location evidence="1">Cytoplasm</location>
    </subcellularLocation>
</comment>
<comment type="miscellaneous">
    <text evidence="1">The reaction proceeds by a bi uni uni bi ping pong mechanism.</text>
</comment>
<comment type="similarity">
    <text evidence="1">Belongs to the pantothenate synthetase family.</text>
</comment>
<reference key="1">
    <citation type="journal article" date="2008" name="PLoS ONE">
        <title>Environmental adaptation: genomic analysis of the piezotolerant and psychrotolerant deep-sea iron reducing bacterium Shewanella piezotolerans WP3.</title>
        <authorList>
            <person name="Wang F."/>
            <person name="Wang J."/>
            <person name="Jian H."/>
            <person name="Zhang B."/>
            <person name="Li S."/>
            <person name="Wang F."/>
            <person name="Zeng X."/>
            <person name="Gao L."/>
            <person name="Bartlett D.H."/>
            <person name="Yu J."/>
            <person name="Hu S."/>
            <person name="Xiao X."/>
        </authorList>
    </citation>
    <scope>NUCLEOTIDE SEQUENCE [LARGE SCALE GENOMIC DNA]</scope>
    <source>
        <strain>WP3 / JCM 13877</strain>
    </source>
</reference>
<organism>
    <name type="scientific">Shewanella piezotolerans (strain WP3 / JCM 13877)</name>
    <dbReference type="NCBI Taxonomy" id="225849"/>
    <lineage>
        <taxon>Bacteria</taxon>
        <taxon>Pseudomonadati</taxon>
        <taxon>Pseudomonadota</taxon>
        <taxon>Gammaproteobacteria</taxon>
        <taxon>Alteromonadales</taxon>
        <taxon>Shewanellaceae</taxon>
        <taxon>Shewanella</taxon>
    </lineage>
</organism>
<evidence type="ECO:0000255" key="1">
    <source>
        <dbReference type="HAMAP-Rule" id="MF_00158"/>
    </source>
</evidence>
<dbReference type="EC" id="6.3.2.1" evidence="1"/>
<dbReference type="EMBL" id="CP000472">
    <property type="protein sequence ID" value="ACJ31036.1"/>
    <property type="molecule type" value="Genomic_DNA"/>
</dbReference>
<dbReference type="RefSeq" id="WP_020914371.1">
    <property type="nucleotide sequence ID" value="NC_011566.1"/>
</dbReference>
<dbReference type="SMR" id="B8CTC7"/>
<dbReference type="STRING" id="225849.swp_4391"/>
<dbReference type="KEGG" id="swp:swp_4391"/>
<dbReference type="eggNOG" id="COG0414">
    <property type="taxonomic scope" value="Bacteria"/>
</dbReference>
<dbReference type="HOGENOM" id="CLU_047148_0_0_6"/>
<dbReference type="OrthoDB" id="9773087at2"/>
<dbReference type="UniPathway" id="UPA00028">
    <property type="reaction ID" value="UER00005"/>
</dbReference>
<dbReference type="Proteomes" id="UP000000753">
    <property type="component" value="Chromosome"/>
</dbReference>
<dbReference type="GO" id="GO:0005829">
    <property type="term" value="C:cytosol"/>
    <property type="evidence" value="ECO:0007669"/>
    <property type="project" value="TreeGrafter"/>
</dbReference>
<dbReference type="GO" id="GO:0005524">
    <property type="term" value="F:ATP binding"/>
    <property type="evidence" value="ECO:0007669"/>
    <property type="project" value="UniProtKB-KW"/>
</dbReference>
<dbReference type="GO" id="GO:0004592">
    <property type="term" value="F:pantoate-beta-alanine ligase activity"/>
    <property type="evidence" value="ECO:0007669"/>
    <property type="project" value="UniProtKB-UniRule"/>
</dbReference>
<dbReference type="GO" id="GO:0015940">
    <property type="term" value="P:pantothenate biosynthetic process"/>
    <property type="evidence" value="ECO:0007669"/>
    <property type="project" value="UniProtKB-UniRule"/>
</dbReference>
<dbReference type="CDD" id="cd00560">
    <property type="entry name" value="PanC"/>
    <property type="match status" value="1"/>
</dbReference>
<dbReference type="FunFam" id="3.40.50.620:FF:000013">
    <property type="entry name" value="Pantothenate synthetase"/>
    <property type="match status" value="1"/>
</dbReference>
<dbReference type="Gene3D" id="3.40.50.620">
    <property type="entry name" value="HUPs"/>
    <property type="match status" value="1"/>
</dbReference>
<dbReference type="Gene3D" id="3.30.1300.10">
    <property type="entry name" value="Pantoate-beta-alanine ligase, C-terminal domain"/>
    <property type="match status" value="1"/>
</dbReference>
<dbReference type="HAMAP" id="MF_00158">
    <property type="entry name" value="PanC"/>
    <property type="match status" value="1"/>
</dbReference>
<dbReference type="InterPro" id="IPR004821">
    <property type="entry name" value="Cyt_trans-like"/>
</dbReference>
<dbReference type="InterPro" id="IPR003721">
    <property type="entry name" value="Pantoate_ligase"/>
</dbReference>
<dbReference type="InterPro" id="IPR042176">
    <property type="entry name" value="Pantoate_ligase_C"/>
</dbReference>
<dbReference type="InterPro" id="IPR014729">
    <property type="entry name" value="Rossmann-like_a/b/a_fold"/>
</dbReference>
<dbReference type="NCBIfam" id="TIGR00125">
    <property type="entry name" value="cyt_tran_rel"/>
    <property type="match status" value="1"/>
</dbReference>
<dbReference type="NCBIfam" id="TIGR00018">
    <property type="entry name" value="panC"/>
    <property type="match status" value="1"/>
</dbReference>
<dbReference type="PANTHER" id="PTHR21299">
    <property type="entry name" value="CYTIDYLATE KINASE/PANTOATE-BETA-ALANINE LIGASE"/>
    <property type="match status" value="1"/>
</dbReference>
<dbReference type="PANTHER" id="PTHR21299:SF1">
    <property type="entry name" value="PANTOATE--BETA-ALANINE LIGASE"/>
    <property type="match status" value="1"/>
</dbReference>
<dbReference type="Pfam" id="PF02569">
    <property type="entry name" value="Pantoate_ligase"/>
    <property type="match status" value="1"/>
</dbReference>
<dbReference type="SUPFAM" id="SSF52374">
    <property type="entry name" value="Nucleotidylyl transferase"/>
    <property type="match status" value="1"/>
</dbReference>
<proteinExistence type="inferred from homology"/>
<name>PANC_SHEPW</name>
<sequence length="282" mass="30885">MITTESISAIRKQVLAWRLKGETVAFVPTMGNLHLGHLTLVREAKSRADHVVASIFVNPMQFGQNEDLDAYPRTLSDDQSALVEAGAELLFTPTPSIIYPKGMEAQTFVEVPLISDQLCGESRPGHFRGVATIVCKLFNIVQPDIAVFGQKDFQQLLVIKTMVEDLSMPIEIIGVETIREDSGLAMSSRNGYLTAAQKQQAAVLKQTLDKMAIELRAGKQTDEVISTAKQAISAAGFDNDYLDIRNAKTFNKADSSDAEQVILVAAYMGATRLIDNLIVKLK</sequence>
<gene>
    <name evidence="1" type="primary">panC</name>
    <name type="ordered locus">swp_4391</name>
</gene>
<accession>B8CTC7</accession>
<protein>
    <recommendedName>
        <fullName evidence="1">Pantothenate synthetase</fullName>
        <shortName evidence="1">PS</shortName>
        <ecNumber evidence="1">6.3.2.1</ecNumber>
    </recommendedName>
    <alternativeName>
        <fullName evidence="1">Pantoate--beta-alanine ligase</fullName>
    </alternativeName>
    <alternativeName>
        <fullName evidence="1">Pantoate-activating enzyme</fullName>
    </alternativeName>
</protein>
<keyword id="KW-0067">ATP-binding</keyword>
<keyword id="KW-0963">Cytoplasm</keyword>
<keyword id="KW-0436">Ligase</keyword>
<keyword id="KW-0547">Nucleotide-binding</keyword>
<keyword id="KW-0566">Pantothenate biosynthesis</keyword>
<feature type="chain" id="PRO_1000118154" description="Pantothenate synthetase">
    <location>
        <begin position="1"/>
        <end position="282"/>
    </location>
</feature>
<feature type="active site" description="Proton donor" evidence="1">
    <location>
        <position position="37"/>
    </location>
</feature>
<feature type="binding site" evidence="1">
    <location>
        <begin position="30"/>
        <end position="37"/>
    </location>
    <ligand>
        <name>ATP</name>
        <dbReference type="ChEBI" id="CHEBI:30616"/>
    </ligand>
</feature>
<feature type="binding site" evidence="1">
    <location>
        <position position="61"/>
    </location>
    <ligand>
        <name>(R)-pantoate</name>
        <dbReference type="ChEBI" id="CHEBI:15980"/>
    </ligand>
</feature>
<feature type="binding site" evidence="1">
    <location>
        <position position="61"/>
    </location>
    <ligand>
        <name>beta-alanine</name>
        <dbReference type="ChEBI" id="CHEBI:57966"/>
    </ligand>
</feature>
<feature type="binding site" evidence="1">
    <location>
        <begin position="149"/>
        <end position="152"/>
    </location>
    <ligand>
        <name>ATP</name>
        <dbReference type="ChEBI" id="CHEBI:30616"/>
    </ligand>
</feature>
<feature type="binding site" evidence="1">
    <location>
        <position position="155"/>
    </location>
    <ligand>
        <name>(R)-pantoate</name>
        <dbReference type="ChEBI" id="CHEBI:15980"/>
    </ligand>
</feature>
<feature type="binding site" evidence="1">
    <location>
        <position position="178"/>
    </location>
    <ligand>
        <name>ATP</name>
        <dbReference type="ChEBI" id="CHEBI:30616"/>
    </ligand>
</feature>
<feature type="binding site" evidence="1">
    <location>
        <begin position="186"/>
        <end position="189"/>
    </location>
    <ligand>
        <name>ATP</name>
        <dbReference type="ChEBI" id="CHEBI:30616"/>
    </ligand>
</feature>